<comment type="function">
    <text evidence="1">Metalloprotease essential for chloroplast and plant development. May be involved in regulated intramembrane proteolysis (RIP).</text>
</comment>
<comment type="cofactor">
    <cofactor evidence="2">
        <name>Zn(2+)</name>
        <dbReference type="ChEBI" id="CHEBI:29105"/>
    </cofactor>
</comment>
<comment type="subcellular location">
    <subcellularLocation>
        <location evidence="3">Plastid</location>
        <location evidence="3">Chloroplast inner membrane</location>
        <topology evidence="3">Multi-pass membrane protein</topology>
    </subcellularLocation>
</comment>
<comment type="disruption phenotype">
    <text evidence="6">No visible phenotype.</text>
</comment>
<comment type="similarity">
    <text evidence="7">Belongs to the peptidase M50A family.</text>
</comment>
<keyword id="KW-0150">Chloroplast</keyword>
<keyword id="KW-0378">Hydrolase</keyword>
<keyword id="KW-0472">Membrane</keyword>
<keyword id="KW-0479">Metal-binding</keyword>
<keyword id="KW-0482">Metalloprotease</keyword>
<keyword id="KW-0934">Plastid</keyword>
<keyword id="KW-1001">Plastid inner membrane</keyword>
<keyword id="KW-0645">Protease</keyword>
<keyword id="KW-1185">Reference proteome</keyword>
<keyword id="KW-0809">Transit peptide</keyword>
<keyword id="KW-0812">Transmembrane</keyword>
<keyword id="KW-1133">Transmembrane helix</keyword>
<keyword id="KW-0862">Zinc</keyword>
<proteinExistence type="evidence at transcript level"/>
<gene>
    <name evidence="7" type="primary">ARASP2</name>
    <name evidence="8" type="ordered locus">At1g05140</name>
    <name evidence="9" type="ORF">YUP8H12.25</name>
</gene>
<sequence>MLLNISSSPISHRIPHFLSDFNNPTSNFPPKSKTHLPKSNLSTLSNHSLYGTKNRAFYKNKRNPYNRTQALGRFDFGSLESVLEASAVLTAIIVVHETGHFLAASLQGIRVSKFAIGFGPILAKFNSNNVEYSLRAFPLGGFVGFPDNDPDSDIPVDDRNLLKNRPILDRVIVVSAGIVANVIFAYAIIFTQVVSVGLPVQESFPGVLVPDVKSFSAASRDGLLPGDVILAVDGTELSNSGSDSVSKVVDVVKRNPEHNVLLRIERGKESFEIRITPDKSFDGTGKIGVQLSPNVRFGKVRPKNIPETFSFAGREFFGLSYNVLDSLKQTFLNFSQTASKVAGPVAIIAVGAEVARSNADGLYQFAALLNLNLAVINLLPLPALDGGTLALILLEAVRGGRKLPLEVEQGIMSSGIMLVLFLGLFLIVKDTLNLDFIKEML</sequence>
<accession>O23053</accession>
<accession>Q8L738</accession>
<feature type="transit peptide" description="Chloroplast" evidence="3">
    <location>
        <begin position="1"/>
        <end position="84"/>
    </location>
</feature>
<feature type="chain" id="PRO_0000432415" description="Probable membrane metalloprotease ARASP2, chloroplastic">
    <location>
        <begin position="85"/>
        <end position="441"/>
    </location>
</feature>
<feature type="transmembrane region" description="Helical; Name=1" evidence="3">
    <location>
        <begin position="171"/>
        <end position="191"/>
    </location>
</feature>
<feature type="transmembrane region" description="Helical; Name=2" evidence="3">
    <location>
        <begin position="373"/>
        <end position="393"/>
    </location>
</feature>
<feature type="transmembrane region" description="Helical; Name=3" evidence="3">
    <location>
        <begin position="407"/>
        <end position="427"/>
    </location>
</feature>
<feature type="domain" description="PDZ" evidence="4">
    <location>
        <begin position="196"/>
        <end position="249"/>
    </location>
</feature>
<feature type="active site" evidence="5">
    <location>
        <position position="97"/>
    </location>
</feature>
<feature type="binding site" evidence="5">
    <location>
        <position position="96"/>
    </location>
    <ligand>
        <name>Zn(2+)</name>
        <dbReference type="ChEBI" id="CHEBI:29105"/>
        <note>catalytic</note>
    </ligand>
</feature>
<feature type="binding site" evidence="5">
    <location>
        <position position="100"/>
    </location>
    <ligand>
        <name>Zn(2+)</name>
        <dbReference type="ChEBI" id="CHEBI:29105"/>
        <note>catalytic</note>
    </ligand>
</feature>
<feature type="sequence conflict" description="In Ref. 3; AAM98118." evidence="7" ref="3">
    <original>F</original>
    <variation>L</variation>
    <location>
        <position position="190"/>
    </location>
</feature>
<reference key="1">
    <citation type="journal article" date="2000" name="Nature">
        <title>Sequence and analysis of chromosome 1 of the plant Arabidopsis thaliana.</title>
        <authorList>
            <person name="Theologis A."/>
            <person name="Ecker J.R."/>
            <person name="Palm C.J."/>
            <person name="Federspiel N.A."/>
            <person name="Kaul S."/>
            <person name="White O."/>
            <person name="Alonso J."/>
            <person name="Altafi H."/>
            <person name="Araujo R."/>
            <person name="Bowman C.L."/>
            <person name="Brooks S.Y."/>
            <person name="Buehler E."/>
            <person name="Chan A."/>
            <person name="Chao Q."/>
            <person name="Chen H."/>
            <person name="Cheuk R.F."/>
            <person name="Chin C.W."/>
            <person name="Chung M.K."/>
            <person name="Conn L."/>
            <person name="Conway A.B."/>
            <person name="Conway A.R."/>
            <person name="Creasy T.H."/>
            <person name="Dewar K."/>
            <person name="Dunn P."/>
            <person name="Etgu P."/>
            <person name="Feldblyum T.V."/>
            <person name="Feng J.-D."/>
            <person name="Fong B."/>
            <person name="Fujii C.Y."/>
            <person name="Gill J.E."/>
            <person name="Goldsmith A.D."/>
            <person name="Haas B."/>
            <person name="Hansen N.F."/>
            <person name="Hughes B."/>
            <person name="Huizar L."/>
            <person name="Hunter J.L."/>
            <person name="Jenkins J."/>
            <person name="Johnson-Hopson C."/>
            <person name="Khan S."/>
            <person name="Khaykin E."/>
            <person name="Kim C.J."/>
            <person name="Koo H.L."/>
            <person name="Kremenetskaia I."/>
            <person name="Kurtz D.B."/>
            <person name="Kwan A."/>
            <person name="Lam B."/>
            <person name="Langin-Hooper S."/>
            <person name="Lee A."/>
            <person name="Lee J.M."/>
            <person name="Lenz C.A."/>
            <person name="Li J.H."/>
            <person name="Li Y.-P."/>
            <person name="Lin X."/>
            <person name="Liu S.X."/>
            <person name="Liu Z.A."/>
            <person name="Luros J.S."/>
            <person name="Maiti R."/>
            <person name="Marziali A."/>
            <person name="Militscher J."/>
            <person name="Miranda M."/>
            <person name="Nguyen M."/>
            <person name="Nierman W.C."/>
            <person name="Osborne B.I."/>
            <person name="Pai G."/>
            <person name="Peterson J."/>
            <person name="Pham P.K."/>
            <person name="Rizzo M."/>
            <person name="Rooney T."/>
            <person name="Rowley D."/>
            <person name="Sakano H."/>
            <person name="Salzberg S.L."/>
            <person name="Schwartz J.R."/>
            <person name="Shinn P."/>
            <person name="Southwick A.M."/>
            <person name="Sun H."/>
            <person name="Tallon L.J."/>
            <person name="Tambunga G."/>
            <person name="Toriumi M.J."/>
            <person name="Town C.D."/>
            <person name="Utterback T."/>
            <person name="Van Aken S."/>
            <person name="Vaysberg M."/>
            <person name="Vysotskaia V.S."/>
            <person name="Walker M."/>
            <person name="Wu D."/>
            <person name="Yu G."/>
            <person name="Fraser C.M."/>
            <person name="Venter J.C."/>
            <person name="Davis R.W."/>
        </authorList>
    </citation>
    <scope>NUCLEOTIDE SEQUENCE [LARGE SCALE GENOMIC DNA]</scope>
    <source>
        <strain>cv. Columbia</strain>
    </source>
</reference>
<reference key="2">
    <citation type="journal article" date="2017" name="Plant J.">
        <title>Araport11: a complete reannotation of the Arabidopsis thaliana reference genome.</title>
        <authorList>
            <person name="Cheng C.Y."/>
            <person name="Krishnakumar V."/>
            <person name="Chan A.P."/>
            <person name="Thibaud-Nissen F."/>
            <person name="Schobel S."/>
            <person name="Town C.D."/>
        </authorList>
    </citation>
    <scope>GENOME REANNOTATION</scope>
    <source>
        <strain>cv. Columbia</strain>
    </source>
</reference>
<reference key="3">
    <citation type="journal article" date="2003" name="Science">
        <title>Empirical analysis of transcriptional activity in the Arabidopsis genome.</title>
        <authorList>
            <person name="Yamada K."/>
            <person name="Lim J."/>
            <person name="Dale J.M."/>
            <person name="Chen H."/>
            <person name="Shinn P."/>
            <person name="Palm C.J."/>
            <person name="Southwick A.M."/>
            <person name="Wu H.C."/>
            <person name="Kim C.J."/>
            <person name="Nguyen M."/>
            <person name="Pham P.K."/>
            <person name="Cheuk R.F."/>
            <person name="Karlin-Newmann G."/>
            <person name="Liu S.X."/>
            <person name="Lam B."/>
            <person name="Sakano H."/>
            <person name="Wu T."/>
            <person name="Yu G."/>
            <person name="Miranda M."/>
            <person name="Quach H.L."/>
            <person name="Tripp M."/>
            <person name="Chang C.H."/>
            <person name="Lee J.M."/>
            <person name="Toriumi M.J."/>
            <person name="Chan M.M."/>
            <person name="Tang C.C."/>
            <person name="Onodera C.S."/>
            <person name="Deng J.M."/>
            <person name="Akiyama K."/>
            <person name="Ansari Y."/>
            <person name="Arakawa T."/>
            <person name="Banh J."/>
            <person name="Banno F."/>
            <person name="Bowser L."/>
            <person name="Brooks S.Y."/>
            <person name="Carninci P."/>
            <person name="Chao Q."/>
            <person name="Choy N."/>
            <person name="Enju A."/>
            <person name="Goldsmith A.D."/>
            <person name="Gurjal M."/>
            <person name="Hansen N.F."/>
            <person name="Hayashizaki Y."/>
            <person name="Johnson-Hopson C."/>
            <person name="Hsuan V.W."/>
            <person name="Iida K."/>
            <person name="Karnes M."/>
            <person name="Khan S."/>
            <person name="Koesema E."/>
            <person name="Ishida J."/>
            <person name="Jiang P.X."/>
            <person name="Jones T."/>
            <person name="Kawai J."/>
            <person name="Kamiya A."/>
            <person name="Meyers C."/>
            <person name="Nakajima M."/>
            <person name="Narusaka M."/>
            <person name="Seki M."/>
            <person name="Sakurai T."/>
            <person name="Satou M."/>
            <person name="Tamse R."/>
            <person name="Vaysberg M."/>
            <person name="Wallender E.K."/>
            <person name="Wong C."/>
            <person name="Yamamura Y."/>
            <person name="Yuan S."/>
            <person name="Shinozaki K."/>
            <person name="Davis R.W."/>
            <person name="Theologis A."/>
            <person name="Ecker J.R."/>
        </authorList>
    </citation>
    <scope>NUCLEOTIDE SEQUENCE [LARGE SCALE MRNA]</scope>
    <source>
        <strain>cv. Columbia</strain>
    </source>
</reference>
<reference key="4">
    <citation type="journal article" date="2002" name="Curr. Genet.">
        <title>The gene complement for proteolysis in the cyanobacterium Synechocystis sp. PCC 6803 and Arabidopsis thaliana chloroplasts.</title>
        <authorList>
            <person name="Sokolenko A."/>
            <person name="Pojidaeva E."/>
            <person name="Zinchenko V."/>
            <person name="Panichkin V."/>
            <person name="Glaser V.M."/>
            <person name="Herrmann R.G."/>
            <person name="Shestakov S.V."/>
        </authorList>
    </citation>
    <scope>IDENTIFICATION</scope>
</reference>
<reference key="5">
    <citation type="journal article" date="2005" name="Plant J.">
        <title>EGY1 encodes a membrane-associated and ATP-independent metalloprotease that is required for chloroplast development.</title>
        <authorList>
            <person name="Chen G."/>
            <person name="Bi Y.R."/>
            <person name="Li N."/>
        </authorList>
    </citation>
    <scope>GENE FAMILY</scope>
</reference>
<reference key="6">
    <citation type="journal article" date="2006" name="FEBS Lett.">
        <title>A chloroplastic inner envelope membrane protease is essential for plant development.</title>
        <authorList>
            <person name="Bolter B."/>
            <person name="Nada A."/>
            <person name="Fulgosi H."/>
            <person name="Soll J."/>
        </authorList>
    </citation>
    <scope>DISRUPTION PHENOTYPE</scope>
</reference>
<dbReference type="EC" id="3.4.24.-"/>
<dbReference type="EMBL" id="AC000098">
    <property type="protein sequence ID" value="AAB71464.1"/>
    <property type="molecule type" value="Genomic_DNA"/>
</dbReference>
<dbReference type="EMBL" id="CP002684">
    <property type="protein sequence ID" value="AEE27794.1"/>
    <property type="molecule type" value="Genomic_DNA"/>
</dbReference>
<dbReference type="EMBL" id="AY062687">
    <property type="protein sequence ID" value="AAL32765.1"/>
    <property type="molecule type" value="mRNA"/>
</dbReference>
<dbReference type="EMBL" id="AY139975">
    <property type="protein sequence ID" value="AAM98118.1"/>
    <property type="molecule type" value="mRNA"/>
</dbReference>
<dbReference type="PIR" id="F86185">
    <property type="entry name" value="F86185"/>
</dbReference>
<dbReference type="RefSeq" id="NP_563729.1">
    <property type="nucleotide sequence ID" value="NM_100392.4"/>
</dbReference>
<dbReference type="SMR" id="O23053"/>
<dbReference type="FunCoup" id="O23053">
    <property type="interactions" value="911"/>
</dbReference>
<dbReference type="STRING" id="3702.O23053"/>
<dbReference type="MEROPS" id="M50.003"/>
<dbReference type="iPTMnet" id="O23053"/>
<dbReference type="PaxDb" id="3702-AT1G05140.1"/>
<dbReference type="ProteomicsDB" id="244478"/>
<dbReference type="EnsemblPlants" id="AT1G05140.1">
    <property type="protein sequence ID" value="AT1G05140.1"/>
    <property type="gene ID" value="AT1G05140"/>
</dbReference>
<dbReference type="GeneID" id="839307"/>
<dbReference type="Gramene" id="AT1G05140.1">
    <property type="protein sequence ID" value="AT1G05140.1"/>
    <property type="gene ID" value="AT1G05140"/>
</dbReference>
<dbReference type="KEGG" id="ath:AT1G05140"/>
<dbReference type="Araport" id="AT1G05140"/>
<dbReference type="TAIR" id="AT1G05140"/>
<dbReference type="eggNOG" id="ENOG502QT40">
    <property type="taxonomic scope" value="Eukaryota"/>
</dbReference>
<dbReference type="HOGENOM" id="CLU_025778_1_1_1"/>
<dbReference type="InParanoid" id="O23053"/>
<dbReference type="OMA" id="QYMVGFG"/>
<dbReference type="PhylomeDB" id="O23053"/>
<dbReference type="PRO" id="PR:O23053"/>
<dbReference type="Proteomes" id="UP000006548">
    <property type="component" value="Chromosome 1"/>
</dbReference>
<dbReference type="ExpressionAtlas" id="O23053">
    <property type="expression patterns" value="baseline and differential"/>
</dbReference>
<dbReference type="GO" id="GO:0009507">
    <property type="term" value="C:chloroplast"/>
    <property type="evidence" value="ECO:0007005"/>
    <property type="project" value="TAIR"/>
</dbReference>
<dbReference type="GO" id="GO:0009706">
    <property type="term" value="C:chloroplast inner membrane"/>
    <property type="evidence" value="ECO:0007669"/>
    <property type="project" value="UniProtKB-SubCell"/>
</dbReference>
<dbReference type="GO" id="GO:0046872">
    <property type="term" value="F:metal ion binding"/>
    <property type="evidence" value="ECO:0007669"/>
    <property type="project" value="UniProtKB-KW"/>
</dbReference>
<dbReference type="GO" id="GO:0004222">
    <property type="term" value="F:metalloendopeptidase activity"/>
    <property type="evidence" value="ECO:0007669"/>
    <property type="project" value="InterPro"/>
</dbReference>
<dbReference type="GO" id="GO:0006508">
    <property type="term" value="P:proteolysis"/>
    <property type="evidence" value="ECO:0007669"/>
    <property type="project" value="UniProtKB-KW"/>
</dbReference>
<dbReference type="GO" id="GO:0009409">
    <property type="term" value="P:response to cold"/>
    <property type="evidence" value="ECO:0000315"/>
    <property type="project" value="TAIR"/>
</dbReference>
<dbReference type="CDD" id="cd06163">
    <property type="entry name" value="S2P-M50_PDZ_RseP-like"/>
    <property type="match status" value="1"/>
</dbReference>
<dbReference type="Gene3D" id="2.30.42.10">
    <property type="match status" value="1"/>
</dbReference>
<dbReference type="InterPro" id="IPR001478">
    <property type="entry name" value="PDZ"/>
</dbReference>
<dbReference type="InterPro" id="IPR041489">
    <property type="entry name" value="PDZ_6"/>
</dbReference>
<dbReference type="InterPro" id="IPR036034">
    <property type="entry name" value="PDZ_sf"/>
</dbReference>
<dbReference type="InterPro" id="IPR004387">
    <property type="entry name" value="Pept_M50_Zn"/>
</dbReference>
<dbReference type="InterPro" id="IPR008915">
    <property type="entry name" value="Peptidase_M50"/>
</dbReference>
<dbReference type="PANTHER" id="PTHR42837:SF2">
    <property type="entry name" value="MEMBRANE METALLOPROTEASE ARASP2, CHLOROPLASTIC-RELATED"/>
    <property type="match status" value="1"/>
</dbReference>
<dbReference type="PANTHER" id="PTHR42837">
    <property type="entry name" value="REGULATOR OF SIGMA-E PROTEASE RSEP"/>
    <property type="match status" value="1"/>
</dbReference>
<dbReference type="Pfam" id="PF17820">
    <property type="entry name" value="PDZ_6"/>
    <property type="match status" value="1"/>
</dbReference>
<dbReference type="Pfam" id="PF02163">
    <property type="entry name" value="Peptidase_M50"/>
    <property type="match status" value="1"/>
</dbReference>
<dbReference type="SMART" id="SM00228">
    <property type="entry name" value="PDZ"/>
    <property type="match status" value="1"/>
</dbReference>
<dbReference type="SUPFAM" id="SSF50156">
    <property type="entry name" value="PDZ domain-like"/>
    <property type="match status" value="1"/>
</dbReference>
<dbReference type="PROSITE" id="PS50106">
    <property type="entry name" value="PDZ"/>
    <property type="match status" value="1"/>
</dbReference>
<protein>
    <recommendedName>
        <fullName evidence="7">Probable membrane metalloprotease ARASP2, chloroplastic</fullName>
        <ecNumber>3.4.24.-</ecNumber>
    </recommendedName>
</protein>
<evidence type="ECO:0000250" key="1">
    <source>
        <dbReference type="UniProtKB" id="O80885"/>
    </source>
</evidence>
<evidence type="ECO:0000250" key="2">
    <source>
        <dbReference type="UniProtKB" id="Q57837"/>
    </source>
</evidence>
<evidence type="ECO:0000255" key="3"/>
<evidence type="ECO:0000255" key="4">
    <source>
        <dbReference type="PROSITE-ProRule" id="PRU00143"/>
    </source>
</evidence>
<evidence type="ECO:0000255" key="5">
    <source>
        <dbReference type="PROSITE-ProRule" id="PRU10095"/>
    </source>
</evidence>
<evidence type="ECO:0000269" key="6">
    <source>
    </source>
</evidence>
<evidence type="ECO:0000305" key="7"/>
<evidence type="ECO:0000312" key="8">
    <source>
        <dbReference type="Araport" id="AT1G05140"/>
    </source>
</evidence>
<evidence type="ECO:0000312" key="9">
    <source>
        <dbReference type="EMBL" id="AAB71464.1"/>
    </source>
</evidence>
<evidence type="ECO:0000312" key="10">
    <source>
        <dbReference type="Proteomes" id="UP000006548"/>
    </source>
</evidence>
<organism evidence="10">
    <name type="scientific">Arabidopsis thaliana</name>
    <name type="common">Mouse-ear cress</name>
    <dbReference type="NCBI Taxonomy" id="3702"/>
    <lineage>
        <taxon>Eukaryota</taxon>
        <taxon>Viridiplantae</taxon>
        <taxon>Streptophyta</taxon>
        <taxon>Embryophyta</taxon>
        <taxon>Tracheophyta</taxon>
        <taxon>Spermatophyta</taxon>
        <taxon>Magnoliopsida</taxon>
        <taxon>eudicotyledons</taxon>
        <taxon>Gunneridae</taxon>
        <taxon>Pentapetalae</taxon>
        <taxon>rosids</taxon>
        <taxon>malvids</taxon>
        <taxon>Brassicales</taxon>
        <taxon>Brassicaceae</taxon>
        <taxon>Camelineae</taxon>
        <taxon>Arabidopsis</taxon>
    </lineage>
</organism>
<name>ARAS2_ARATH</name>